<dbReference type="EMBL" id="AF166114">
    <property type="protein sequence ID" value="AAF43803.1"/>
    <property type="molecule type" value="Genomic_DNA"/>
</dbReference>
<dbReference type="RefSeq" id="NP_038362.1">
    <property type="nucleotide sequence ID" value="NC_002186.1"/>
</dbReference>
<dbReference type="SMR" id="Q9MUU8"/>
<dbReference type="GeneID" id="800883"/>
<dbReference type="GO" id="GO:0009507">
    <property type="term" value="C:chloroplast"/>
    <property type="evidence" value="ECO:0007669"/>
    <property type="project" value="UniProtKB-SubCell"/>
</dbReference>
<dbReference type="GO" id="GO:1990904">
    <property type="term" value="C:ribonucleoprotein complex"/>
    <property type="evidence" value="ECO:0007669"/>
    <property type="project" value="UniProtKB-KW"/>
</dbReference>
<dbReference type="GO" id="GO:0005840">
    <property type="term" value="C:ribosome"/>
    <property type="evidence" value="ECO:0007669"/>
    <property type="project" value="UniProtKB-KW"/>
</dbReference>
<dbReference type="GO" id="GO:0003735">
    <property type="term" value="F:structural constituent of ribosome"/>
    <property type="evidence" value="ECO:0007669"/>
    <property type="project" value="InterPro"/>
</dbReference>
<dbReference type="GO" id="GO:0006412">
    <property type="term" value="P:translation"/>
    <property type="evidence" value="ECO:0007669"/>
    <property type="project" value="UniProtKB-UniRule"/>
</dbReference>
<dbReference type="HAMAP" id="MF_00251">
    <property type="entry name" value="Ribosomal_bL36"/>
    <property type="match status" value="1"/>
</dbReference>
<dbReference type="InterPro" id="IPR000473">
    <property type="entry name" value="Ribosomal_bL36"/>
</dbReference>
<dbReference type="InterPro" id="IPR035977">
    <property type="entry name" value="Ribosomal_bL36_sp"/>
</dbReference>
<dbReference type="NCBIfam" id="TIGR01022">
    <property type="entry name" value="rpmJ_bact"/>
    <property type="match status" value="1"/>
</dbReference>
<dbReference type="PANTHER" id="PTHR42888">
    <property type="entry name" value="50S RIBOSOMAL PROTEIN L36, CHLOROPLASTIC"/>
    <property type="match status" value="1"/>
</dbReference>
<dbReference type="PANTHER" id="PTHR42888:SF1">
    <property type="entry name" value="LARGE RIBOSOMAL SUBUNIT PROTEIN BL36C"/>
    <property type="match status" value="1"/>
</dbReference>
<dbReference type="Pfam" id="PF00444">
    <property type="entry name" value="Ribosomal_L36"/>
    <property type="match status" value="1"/>
</dbReference>
<dbReference type="SUPFAM" id="SSF57840">
    <property type="entry name" value="Ribosomal protein L36"/>
    <property type="match status" value="1"/>
</dbReference>
<dbReference type="PROSITE" id="PS00828">
    <property type="entry name" value="RIBOSOMAL_L36"/>
    <property type="match status" value="1"/>
</dbReference>
<organism>
    <name type="scientific">Mesostigma viride</name>
    <name type="common">Green alga</name>
    <dbReference type="NCBI Taxonomy" id="41882"/>
    <lineage>
        <taxon>Eukaryota</taxon>
        <taxon>Viridiplantae</taxon>
        <taxon>Streptophyta</taxon>
        <taxon>Mesostigmatophyceae</taxon>
        <taxon>Mesostigmatales</taxon>
        <taxon>Mesostigmataceae</taxon>
        <taxon>Mesostigma</taxon>
    </lineage>
</organism>
<geneLocation type="chloroplast"/>
<proteinExistence type="inferred from homology"/>
<evidence type="ECO:0000305" key="1"/>
<protein>
    <recommendedName>
        <fullName evidence="1">Large ribosomal subunit protein bL36c</fullName>
    </recommendedName>
    <alternativeName>
        <fullName>50S ribosomal protein L36, chloroplastic</fullName>
    </alternativeName>
</protein>
<gene>
    <name type="primary">rpl36</name>
</gene>
<comment type="subcellular location">
    <subcellularLocation>
        <location>Plastid</location>
        <location>Chloroplast</location>
    </subcellularLocation>
</comment>
<comment type="similarity">
    <text evidence="1">Belongs to the bacterial ribosomal protein bL36 family.</text>
</comment>
<feature type="chain" id="PRO_0000126328" description="Large ribosomal subunit protein bL36c">
    <location>
        <begin position="1"/>
        <end position="38"/>
    </location>
</feature>
<reference key="1">
    <citation type="journal article" date="2000" name="Nature">
        <title>Ancestral chloroplast genome in Mesostigma viride reveals an early branch of green plant evolution.</title>
        <authorList>
            <person name="Lemieux C."/>
            <person name="Otis C."/>
            <person name="Turmel M."/>
        </authorList>
    </citation>
    <scope>NUCLEOTIDE SEQUENCE [LARGE SCALE GENOMIC DNA]</scope>
    <source>
        <strain>NIES-296 / KY-14 / CCMP 2046</strain>
    </source>
</reference>
<accession>Q9MUU8</accession>
<name>RK36_MESVI</name>
<sequence length="38" mass="4439">MKVRASVRKICENCRLIKRRGTVMVICSNNPKHKQRQG</sequence>
<keyword id="KW-0150">Chloroplast</keyword>
<keyword id="KW-0934">Plastid</keyword>
<keyword id="KW-0687">Ribonucleoprotein</keyword>
<keyword id="KW-0689">Ribosomal protein</keyword>